<comment type="function">
    <text evidence="1">Catalytic subunit of the SLX1-SLX4 structure-specific endonuclease that resolves DNA secondary structures generated during DNA repair and recombination. Has endonuclease activity towards branched DNA substrates, introducing single-strand cuts in duplex DNA close to junctions with ss-DNA.</text>
</comment>
<comment type="cofactor">
    <cofactor evidence="1">
        <name>a divalent metal cation</name>
        <dbReference type="ChEBI" id="CHEBI:60240"/>
    </cofactor>
</comment>
<comment type="subunit">
    <text evidence="1">Forms a heterodimer with SLX4.</text>
</comment>
<comment type="subcellular location">
    <subcellularLocation>
        <location evidence="1">Nucleus</location>
    </subcellularLocation>
</comment>
<comment type="similarity">
    <text evidence="1">Belongs to the SLX1 family.</text>
</comment>
<reference key="1">
    <citation type="journal article" date="2004" name="Nature">
        <title>Genome evolution in yeasts.</title>
        <authorList>
            <person name="Dujon B."/>
            <person name="Sherman D."/>
            <person name="Fischer G."/>
            <person name="Durrens P."/>
            <person name="Casaregola S."/>
            <person name="Lafontaine I."/>
            <person name="de Montigny J."/>
            <person name="Marck C."/>
            <person name="Neuveglise C."/>
            <person name="Talla E."/>
            <person name="Goffard N."/>
            <person name="Frangeul L."/>
            <person name="Aigle M."/>
            <person name="Anthouard V."/>
            <person name="Babour A."/>
            <person name="Barbe V."/>
            <person name="Barnay S."/>
            <person name="Blanchin S."/>
            <person name="Beckerich J.-M."/>
            <person name="Beyne E."/>
            <person name="Bleykasten C."/>
            <person name="Boisrame A."/>
            <person name="Boyer J."/>
            <person name="Cattolico L."/>
            <person name="Confanioleri F."/>
            <person name="de Daruvar A."/>
            <person name="Despons L."/>
            <person name="Fabre E."/>
            <person name="Fairhead C."/>
            <person name="Ferry-Dumazet H."/>
            <person name="Groppi A."/>
            <person name="Hantraye F."/>
            <person name="Hennequin C."/>
            <person name="Jauniaux N."/>
            <person name="Joyet P."/>
            <person name="Kachouri R."/>
            <person name="Kerrest A."/>
            <person name="Koszul R."/>
            <person name="Lemaire M."/>
            <person name="Lesur I."/>
            <person name="Ma L."/>
            <person name="Muller H."/>
            <person name="Nicaud J.-M."/>
            <person name="Nikolski M."/>
            <person name="Oztas S."/>
            <person name="Ozier-Kalogeropoulos O."/>
            <person name="Pellenz S."/>
            <person name="Potier S."/>
            <person name="Richard G.-F."/>
            <person name="Straub M.-L."/>
            <person name="Suleau A."/>
            <person name="Swennen D."/>
            <person name="Tekaia F."/>
            <person name="Wesolowski-Louvel M."/>
            <person name="Westhof E."/>
            <person name="Wirth B."/>
            <person name="Zeniou-Meyer M."/>
            <person name="Zivanovic Y."/>
            <person name="Bolotin-Fukuhara M."/>
            <person name="Thierry A."/>
            <person name="Bouchier C."/>
            <person name="Caudron B."/>
            <person name="Scarpelli C."/>
            <person name="Gaillardin C."/>
            <person name="Weissenbach J."/>
            <person name="Wincker P."/>
            <person name="Souciet J.-L."/>
        </authorList>
    </citation>
    <scope>NUCLEOTIDE SEQUENCE [LARGE SCALE GENOMIC DNA]</scope>
    <source>
        <strain>CLIB 122 / E 150</strain>
    </source>
</reference>
<name>SLX1_YARLI</name>
<sequence length="288" mass="32838">MTHQYPPFYGVYLLQSTKKPLSCYVGSTPNPFRRIRQHNGDLKAGGAWRTKRAHLRPWSMVLIVNGFPSKISALKFEHALQHPNMTRLITTKDIKRKVPQKARALGTHLAFIRLLVRCSYFRRMHLRITFFRSHAHEAWEKNDYDVGSLPPQFQVETDYPSDEAEAPPSTVGSGELDINNRSIEEYLQKCRDAVSNDKQLTCYLSEKTLNISEGNVALCHNCDGAFDVAELAERFLNEEIPEELPFTTPSRHIIPIGGDCPSCLARMEWSNVIKGVLAMRPVLEDNKE</sequence>
<accession>Q6C0W7</accession>
<dbReference type="EC" id="3.1.-.-" evidence="1"/>
<dbReference type="EMBL" id="CR382132">
    <property type="protein sequence ID" value="CAG78504.1"/>
    <property type="molecule type" value="Genomic_DNA"/>
</dbReference>
<dbReference type="RefSeq" id="XP_505695.1">
    <property type="nucleotide sequence ID" value="XM_505695.1"/>
</dbReference>
<dbReference type="SMR" id="Q6C0W7"/>
<dbReference type="FunCoup" id="Q6C0W7">
    <property type="interactions" value="431"/>
</dbReference>
<dbReference type="STRING" id="284591.Q6C0W7"/>
<dbReference type="EnsemblFungi" id="CAG78504">
    <property type="protein sequence ID" value="CAG78504"/>
    <property type="gene ID" value="YALI0_F21131g"/>
</dbReference>
<dbReference type="VEuPathDB" id="FungiDB:YALI0_F21131g"/>
<dbReference type="HOGENOM" id="CLU_030739_1_1_1"/>
<dbReference type="InParanoid" id="Q6C0W7"/>
<dbReference type="OMA" id="FRSHAHE"/>
<dbReference type="OrthoDB" id="6449at4891"/>
<dbReference type="Proteomes" id="UP000001300">
    <property type="component" value="Chromosome F"/>
</dbReference>
<dbReference type="GO" id="GO:0033557">
    <property type="term" value="C:Slx1-Slx4 complex"/>
    <property type="evidence" value="ECO:0000318"/>
    <property type="project" value="GO_Central"/>
</dbReference>
<dbReference type="GO" id="GO:0017108">
    <property type="term" value="F:5'-flap endonuclease activity"/>
    <property type="evidence" value="ECO:0000318"/>
    <property type="project" value="GO_Central"/>
</dbReference>
<dbReference type="GO" id="GO:0008821">
    <property type="term" value="F:crossover junction DNA endonuclease activity"/>
    <property type="evidence" value="ECO:0000318"/>
    <property type="project" value="GO_Central"/>
</dbReference>
<dbReference type="GO" id="GO:0006261">
    <property type="term" value="P:DNA-templated DNA replication"/>
    <property type="evidence" value="ECO:0007669"/>
    <property type="project" value="EnsemblFungi"/>
</dbReference>
<dbReference type="GO" id="GO:0000724">
    <property type="term" value="P:double-strand break repair via homologous recombination"/>
    <property type="evidence" value="ECO:0000318"/>
    <property type="project" value="GO_Central"/>
</dbReference>
<dbReference type="CDD" id="cd10455">
    <property type="entry name" value="GIY-YIG_SLX1"/>
    <property type="match status" value="1"/>
</dbReference>
<dbReference type="Gene3D" id="3.40.1440.10">
    <property type="entry name" value="GIY-YIG endonuclease"/>
    <property type="match status" value="1"/>
</dbReference>
<dbReference type="Gene3D" id="3.30.40.10">
    <property type="entry name" value="Zinc/RING finger domain, C3HC4 (zinc finger)"/>
    <property type="match status" value="1"/>
</dbReference>
<dbReference type="HAMAP" id="MF_03100">
    <property type="entry name" value="Endonuc_su_Slx1"/>
    <property type="match status" value="1"/>
</dbReference>
<dbReference type="InterPro" id="IPR000305">
    <property type="entry name" value="GIY-YIG_endonuc"/>
</dbReference>
<dbReference type="InterPro" id="IPR035901">
    <property type="entry name" value="GIY-YIG_endonuc_sf"/>
</dbReference>
<dbReference type="InterPro" id="IPR027520">
    <property type="entry name" value="Slx1"/>
</dbReference>
<dbReference type="InterPro" id="IPR048749">
    <property type="entry name" value="SLX1_C"/>
</dbReference>
<dbReference type="InterPro" id="IPR050381">
    <property type="entry name" value="SLX1_endonuclease"/>
</dbReference>
<dbReference type="InterPro" id="IPR013083">
    <property type="entry name" value="Znf_RING/FYVE/PHD"/>
</dbReference>
<dbReference type="PANTHER" id="PTHR20208">
    <property type="entry name" value="STRUCTURE-SPECIFIC ENDONUCLEASE SUBUNIT SLX1"/>
    <property type="match status" value="1"/>
</dbReference>
<dbReference type="PANTHER" id="PTHR20208:SF10">
    <property type="entry name" value="STRUCTURE-SPECIFIC ENDONUCLEASE SUBUNIT SLX1"/>
    <property type="match status" value="1"/>
</dbReference>
<dbReference type="Pfam" id="PF01541">
    <property type="entry name" value="GIY-YIG"/>
    <property type="match status" value="1"/>
</dbReference>
<dbReference type="Pfam" id="PF21202">
    <property type="entry name" value="SLX1_C"/>
    <property type="match status" value="1"/>
</dbReference>
<dbReference type="SUPFAM" id="SSF82771">
    <property type="entry name" value="GIY-YIG endonuclease"/>
    <property type="match status" value="1"/>
</dbReference>
<dbReference type="PROSITE" id="PS50164">
    <property type="entry name" value="GIY_YIG"/>
    <property type="match status" value="1"/>
</dbReference>
<keyword id="KW-0227">DNA damage</keyword>
<keyword id="KW-0233">DNA recombination</keyword>
<keyword id="KW-0234">DNA repair</keyword>
<keyword id="KW-0255">Endonuclease</keyword>
<keyword id="KW-0378">Hydrolase</keyword>
<keyword id="KW-0540">Nuclease</keyword>
<keyword id="KW-0539">Nucleus</keyword>
<keyword id="KW-1185">Reference proteome</keyword>
<feature type="chain" id="PRO_0000383803" description="Structure-specific endonuclease subunit SLX1">
    <location>
        <begin position="1"/>
        <end position="288"/>
    </location>
</feature>
<feature type="domain" description="GIY-YIG" evidence="1">
    <location>
        <begin position="7"/>
        <end position="90"/>
    </location>
</feature>
<organism>
    <name type="scientific">Yarrowia lipolytica (strain CLIB 122 / E 150)</name>
    <name type="common">Yeast</name>
    <name type="synonym">Candida lipolytica</name>
    <dbReference type="NCBI Taxonomy" id="284591"/>
    <lineage>
        <taxon>Eukaryota</taxon>
        <taxon>Fungi</taxon>
        <taxon>Dikarya</taxon>
        <taxon>Ascomycota</taxon>
        <taxon>Saccharomycotina</taxon>
        <taxon>Dipodascomycetes</taxon>
        <taxon>Dipodascales</taxon>
        <taxon>Dipodascales incertae sedis</taxon>
        <taxon>Yarrowia</taxon>
    </lineage>
</organism>
<gene>
    <name evidence="1" type="primary">SLX1</name>
    <name type="ordered locus">YALI0F21131g</name>
</gene>
<evidence type="ECO:0000255" key="1">
    <source>
        <dbReference type="HAMAP-Rule" id="MF_03100"/>
    </source>
</evidence>
<protein>
    <recommendedName>
        <fullName evidence="1">Structure-specific endonuclease subunit SLX1</fullName>
        <ecNumber evidence="1">3.1.-.-</ecNumber>
    </recommendedName>
</protein>
<proteinExistence type="inferred from homology"/>